<proteinExistence type="inferred from homology"/>
<organism>
    <name type="scientific">Hepatitis B virus genotype B1 subtype adw (isolate Japan/pJDW233/1988)</name>
    <name type="common">HBV-B</name>
    <dbReference type="NCBI Taxonomy" id="10413"/>
    <lineage>
        <taxon>Viruses</taxon>
        <taxon>Riboviria</taxon>
        <taxon>Pararnavirae</taxon>
        <taxon>Artverviricota</taxon>
        <taxon>Revtraviricetes</taxon>
        <taxon>Blubervirales</taxon>
        <taxon>Hepadnaviridae</taxon>
        <taxon>Orthohepadnavirus</taxon>
        <taxon>Hepatitis B virus</taxon>
    </lineage>
</organism>
<accession>P20976</accession>
<feature type="chain" id="PRO_0000222367" description="Protein X">
    <location>
        <begin position="1"/>
        <end position="154"/>
    </location>
</feature>
<feature type="region of interest" description="Mitochondrial targeting sequence" evidence="1">
    <location>
        <begin position="68"/>
        <end position="117"/>
    </location>
</feature>
<keyword id="KW-1074">Activation of host NF-kappa-B by virus</keyword>
<keyword id="KW-0010">Activator</keyword>
<keyword id="KW-0053">Apoptosis</keyword>
<keyword id="KW-1035">Host cytoplasm</keyword>
<keyword id="KW-1079">Host G2/M cell cycle arrest by virus</keyword>
<keyword id="KW-1045">Host mitochondrion</keyword>
<keyword id="KW-1048">Host nucleus</keyword>
<keyword id="KW-0945">Host-virus interaction</keyword>
<keyword id="KW-1121">Modulation of host cell cycle by virus</keyword>
<keyword id="KW-0804">Transcription</keyword>
<keyword id="KW-0805">Transcription regulation</keyword>
<comment type="function">
    <text evidence="1">Multifunctional protein that plays a role in silencing host antiviral defenses and promoting viral transcription. Does not seem to be essential for HBV infection. May be directly involved in development of cirrhosis and liver cancer (hepatocellular carcinoma). Most of cytosolic activities involve modulation of cytosolic calcium. The effect on apoptosis is controversial depending on the cell types in which the studies have been conducted. May induce apoptosis by localizing in mitochondria and causing loss of mitochondrial membrane potential. May also modulate apoptosis by binding host CFLAR, a key regulator of the death-inducing signaling complex (DISC). Promotes viral transcription by using the host E3 ubiquitin ligase DDB1 to target the SMC5-SMC6 complex to proteasomal degradation. This host complex would otherwise bind to viral episomal DNA, and prevents its transcription. Moderately stimulates transcription of many different viral and cellular transcription elements. Promoters and enhancers stimulated by HBx contain DNA binding sites for NF-kappa-B, AP-1, AP-2, c-EBP, ATF/CREB, or the calcium-activated factor NF-AT.</text>
</comment>
<comment type="subunit">
    <text evidence="1">May form homodimer. May interact with host CEBPA, CFLAR, CREB1, DDB1, E4F1, HBXIP, HSPD1/HSP60, NFKBIA, POLR2E and SMAD4. Interacts with host SMC5-SMC6 complex and induces its degradation. Interacts with host TRPC4AP; leading to prevent ubiquitination of TRPC4AP. Interacts with host PLSCR1; this interaction promotes ubiquitination and degradation of HBx and impairs HBx-mediated cell proliferation.</text>
</comment>
<comment type="subcellular location">
    <subcellularLocation>
        <location evidence="1">Host cytoplasm</location>
    </subcellularLocation>
    <subcellularLocation>
        <location evidence="1">Host nucleus</location>
    </subcellularLocation>
    <subcellularLocation>
        <location evidence="1">Host mitochondrion</location>
    </subcellularLocation>
    <text evidence="1">Mainly cytoplasmic as only a fraction is detected in the nucleus. In cytoplasm, a minor fraction associates with mitochondria or proteasomes.</text>
</comment>
<comment type="PTM">
    <text evidence="1">A fraction may be phosphorylated in insect cells and HepG2 cells, a human hepatoblastoma cell line. Phosphorylated in vitro by host protein kinase C or mitogen-activated protein kinase. N-acetylated in insect cells.</text>
</comment>
<comment type="similarity">
    <text evidence="1">Belongs to the orthohepadnavirus protein X family.</text>
</comment>
<comment type="caution">
    <text>Transcriptional activities should be taken with a grain of salt. As of 2007, all studies demonstrating in vivo interaction between protein X and transcriptional components were performed with significant overexpression of both proteins and in the absence of viral infection.</text>
</comment>
<evidence type="ECO:0000255" key="1">
    <source>
        <dbReference type="HAMAP-Rule" id="MF_04074"/>
    </source>
</evidence>
<protein>
    <recommendedName>
        <fullName evidence="1">Protein X</fullName>
    </recommendedName>
    <alternativeName>
        <fullName evidence="1">HBx</fullName>
    </alternativeName>
    <alternativeName>
        <fullName evidence="1">Peptide X</fullName>
    </alternativeName>
    <alternativeName>
        <fullName evidence="1">pX</fullName>
    </alternativeName>
</protein>
<name>X_HBVB1</name>
<reference key="1">
    <citation type="journal article" date="1988" name="J. Gen. Virol.">
        <title>Typing hepatitis B virus by homology in nucleotide sequence: comparison of surface antigen subtypes.</title>
        <authorList>
            <person name="Okamoto H."/>
            <person name="Tsuda F."/>
            <person name="Sakugawa H."/>
            <person name="Sastrosoewignjo R.I."/>
            <person name="Imai M."/>
            <person name="Miyakawa Y."/>
            <person name="Mayumi M."/>
        </authorList>
    </citation>
    <scope>NUCLEOTIDE SEQUENCE [GENOMIC DNA]</scope>
</reference>
<reference key="2">
    <citation type="journal article" date="2004" name="J. Virol.">
        <title>The enigmatic X gene of hepatitis B virus.</title>
        <authorList>
            <person name="Bouchard M.J."/>
            <person name="Schneider R.J."/>
        </authorList>
    </citation>
    <scope>REVIEW</scope>
</reference>
<reference key="3">
    <citation type="journal article" date="2006" name="Cancer Sci.">
        <title>Molecular functions and biological roles of hepatitis B virus x protein.</title>
        <authorList>
            <person name="Tang H."/>
            <person name="Oishi N."/>
            <person name="Kaneko S."/>
            <person name="Murakami S."/>
        </authorList>
    </citation>
    <scope>REVIEW</scope>
</reference>
<organismHost>
    <name type="scientific">Homo sapiens</name>
    <name type="common">Human</name>
    <dbReference type="NCBI Taxonomy" id="9606"/>
</organismHost>
<organismHost>
    <name type="scientific">Pan troglodytes</name>
    <name type="common">Chimpanzee</name>
    <dbReference type="NCBI Taxonomy" id="9598"/>
</organismHost>
<dbReference type="EMBL" id="D00329">
    <property type="status" value="NOT_ANNOTATED_CDS"/>
    <property type="molecule type" value="Genomic_DNA"/>
</dbReference>
<dbReference type="PIR" id="JS0256">
    <property type="entry name" value="JS0256"/>
</dbReference>
<dbReference type="Proteomes" id="UP000007913">
    <property type="component" value="Segment"/>
</dbReference>
<dbReference type="GO" id="GO:0033650">
    <property type="term" value="C:host cell mitochondrion"/>
    <property type="evidence" value="ECO:0007669"/>
    <property type="project" value="UniProtKB-SubCell"/>
</dbReference>
<dbReference type="GO" id="GO:0042025">
    <property type="term" value="C:host cell nucleus"/>
    <property type="evidence" value="ECO:0007669"/>
    <property type="project" value="UniProtKB-SubCell"/>
</dbReference>
<dbReference type="GO" id="GO:0006351">
    <property type="term" value="P:DNA-templated transcription"/>
    <property type="evidence" value="ECO:0007669"/>
    <property type="project" value="UniProtKB-UniRule"/>
</dbReference>
<dbReference type="GO" id="GO:0085033">
    <property type="term" value="P:symbiont-mediated activation of host NF-kappaB cascade"/>
    <property type="evidence" value="ECO:0007669"/>
    <property type="project" value="UniProtKB-UniRule"/>
</dbReference>
<dbReference type="GO" id="GO:0039592">
    <property type="term" value="P:symbiont-mediated arrest of host cell cycle during G2/M transition"/>
    <property type="evidence" value="ECO:0007669"/>
    <property type="project" value="UniProtKB-UniRule"/>
</dbReference>
<dbReference type="GO" id="GO:0019079">
    <property type="term" value="P:viral genome replication"/>
    <property type="evidence" value="ECO:0007669"/>
    <property type="project" value="UniProtKB-UniRule"/>
</dbReference>
<dbReference type="HAMAP" id="MF_04074">
    <property type="entry name" value="HBV_X"/>
    <property type="match status" value="1"/>
</dbReference>
<dbReference type="InterPro" id="IPR000236">
    <property type="entry name" value="Transactivation_prot_X"/>
</dbReference>
<dbReference type="Pfam" id="PF00739">
    <property type="entry name" value="X"/>
    <property type="match status" value="1"/>
</dbReference>
<sequence>MAARLCCQLDPARDVLCLRPVGAESRGRPLPGPLGALPPASPSAVPSDHGAHLSLRGLPVCAFSSAGPCALRFTSARRMETTVNAHRNLPKVLHKRTLGLSAMSTTDLEAYFKDCVFNEWEELGEEIRLKVFVLGGCRHKLVCSPAPCNFFTSA</sequence>
<gene>
    <name evidence="1" type="primary">X</name>
</gene>